<comment type="subcellular location">
    <subcellularLocation>
        <location evidence="1">Cell membrane</location>
        <topology evidence="1">Multi-pass membrane protein</topology>
    </subcellularLocation>
</comment>
<comment type="similarity">
    <text evidence="1">Belongs to the AAE transporter (TC 2.A.81) family. YidE subfamily.</text>
</comment>
<protein>
    <recommendedName>
        <fullName evidence="1">Putative transport protein YidE</fullName>
    </recommendedName>
</protein>
<evidence type="ECO:0000255" key="1">
    <source>
        <dbReference type="HAMAP-Rule" id="MF_01016"/>
    </source>
</evidence>
<reference key="1">
    <citation type="journal article" date="2011" name="J. Bacteriol.">
        <title>Comparative genomics of 28 Salmonella enterica isolates: evidence for CRISPR-mediated adaptive sublineage evolution.</title>
        <authorList>
            <person name="Fricke W.F."/>
            <person name="Mammel M.K."/>
            <person name="McDermott P.F."/>
            <person name="Tartera C."/>
            <person name="White D.G."/>
            <person name="Leclerc J.E."/>
            <person name="Ravel J."/>
            <person name="Cebula T.A."/>
        </authorList>
    </citation>
    <scope>NUCLEOTIDE SEQUENCE [LARGE SCALE GENOMIC DNA]</scope>
    <source>
        <strain>SL254</strain>
    </source>
</reference>
<proteinExistence type="inferred from homology"/>
<keyword id="KW-1003">Cell membrane</keyword>
<keyword id="KW-0472">Membrane</keyword>
<keyword id="KW-0677">Repeat</keyword>
<keyword id="KW-0812">Transmembrane</keyword>
<keyword id="KW-1133">Transmembrane helix</keyword>
<keyword id="KW-0813">Transport</keyword>
<sequence length="553" mass="58893">MSDIALTVSVLALVAVVGLWIGNIKVRGVGFGIGGVLFGGIIVGHFVDQAGVTLSGDMLHFIQEFGLILFVYTIGIQVGPGFFASLRVSGLRLNLFAVLIVIMGGLVTAILHKIFAIPLPVVLGIFSGAVTNTPALGAGQQILRDLGTPVDLVDQMGMSYAMAYPFGICGILLTMWLMRLIFRVNVEAEAQKHESSLANGHSLIQTMNIRVENPNLNNMAIQDVPILNSDKIICSRLKRDDTLMVPSPGTIIQAGDLLHLVGQSTDLHNAQLVIGKEVDTSLSTRGTDLRVERVVVTNEKVLGKRIRDLHFKERYDVVISRLNRAGVELVASSDASLQFGDILNLVGRPASIDAVANVVGNAQQKLQQVQMLPVFIGIGLGVLLGSIPLFVPGFPVALKLGLAGGPLIMALILGRIGSIGKLYWFMPPSANLALRELGIVLFLAVVGLKSGGDFVDTLTQGEGLSWIGYGIFITAIPLITVGLLARIFAKMNYLTLCGMLAGSMTDPPALAFANNLHATSGAAALSYATVYPLVMFLRIITPQLLAVIFWGMG</sequence>
<name>YIDE_SALNS</name>
<gene>
    <name evidence="1" type="primary">yidE</name>
    <name type="ordered locus">SNSL254_A4089</name>
</gene>
<feature type="chain" id="PRO_1000135217" description="Putative transport protein YidE">
    <location>
        <begin position="1"/>
        <end position="553"/>
    </location>
</feature>
<feature type="transmembrane region" description="Helical" evidence="1">
    <location>
        <begin position="4"/>
        <end position="24"/>
    </location>
</feature>
<feature type="transmembrane region" description="Helical" evidence="1">
    <location>
        <begin position="28"/>
        <end position="48"/>
    </location>
</feature>
<feature type="transmembrane region" description="Helical" evidence="1">
    <location>
        <begin position="65"/>
        <end position="85"/>
    </location>
</feature>
<feature type="transmembrane region" description="Helical" evidence="1">
    <location>
        <begin position="95"/>
        <end position="115"/>
    </location>
</feature>
<feature type="transmembrane region" description="Helical" evidence="1">
    <location>
        <begin position="158"/>
        <end position="178"/>
    </location>
</feature>
<feature type="transmembrane region" description="Helical" evidence="1">
    <location>
        <begin position="371"/>
        <end position="391"/>
    </location>
</feature>
<feature type="transmembrane region" description="Helical" evidence="1">
    <location>
        <begin position="393"/>
        <end position="413"/>
    </location>
</feature>
<feature type="transmembrane region" description="Helical" evidence="1">
    <location>
        <begin position="437"/>
        <end position="457"/>
    </location>
</feature>
<feature type="transmembrane region" description="Helical" evidence="1">
    <location>
        <begin position="464"/>
        <end position="484"/>
    </location>
</feature>
<feature type="transmembrane region" description="Helical" evidence="1">
    <location>
        <begin position="493"/>
        <end position="513"/>
    </location>
</feature>
<feature type="transmembrane region" description="Helical" evidence="1">
    <location>
        <begin position="533"/>
        <end position="553"/>
    </location>
</feature>
<feature type="domain" description="RCK C-terminal 1" evidence="1">
    <location>
        <begin position="192"/>
        <end position="276"/>
    </location>
</feature>
<feature type="domain" description="RCK C-terminal 2" evidence="1">
    <location>
        <begin position="279"/>
        <end position="361"/>
    </location>
</feature>
<dbReference type="EMBL" id="CP001113">
    <property type="protein sequence ID" value="ACF62298.1"/>
    <property type="molecule type" value="Genomic_DNA"/>
</dbReference>
<dbReference type="RefSeq" id="WP_001279793.1">
    <property type="nucleotide sequence ID" value="NZ_CCMR01000004.1"/>
</dbReference>
<dbReference type="SMR" id="B4SY75"/>
<dbReference type="KEGG" id="see:SNSL254_A4089"/>
<dbReference type="HOGENOM" id="CLU_035023_3_1_6"/>
<dbReference type="Proteomes" id="UP000008824">
    <property type="component" value="Chromosome"/>
</dbReference>
<dbReference type="GO" id="GO:0005886">
    <property type="term" value="C:plasma membrane"/>
    <property type="evidence" value="ECO:0007669"/>
    <property type="project" value="UniProtKB-SubCell"/>
</dbReference>
<dbReference type="GO" id="GO:0008324">
    <property type="term" value="F:monoatomic cation transmembrane transporter activity"/>
    <property type="evidence" value="ECO:0007669"/>
    <property type="project" value="InterPro"/>
</dbReference>
<dbReference type="GO" id="GO:0006813">
    <property type="term" value="P:potassium ion transport"/>
    <property type="evidence" value="ECO:0007669"/>
    <property type="project" value="InterPro"/>
</dbReference>
<dbReference type="FunFam" id="3.30.70.1450:FF:000004">
    <property type="entry name" value="Putative transport protein YidE"/>
    <property type="match status" value="1"/>
</dbReference>
<dbReference type="Gene3D" id="3.30.70.1450">
    <property type="entry name" value="Regulator of K+ conductance, C-terminal domain"/>
    <property type="match status" value="2"/>
</dbReference>
<dbReference type="HAMAP" id="MF_01016">
    <property type="entry name" value="YidE"/>
    <property type="match status" value="1"/>
</dbReference>
<dbReference type="InterPro" id="IPR050144">
    <property type="entry name" value="AAE_transporter"/>
</dbReference>
<dbReference type="InterPro" id="IPR006037">
    <property type="entry name" value="RCK_C"/>
</dbReference>
<dbReference type="InterPro" id="IPR036721">
    <property type="entry name" value="RCK_C_sf"/>
</dbReference>
<dbReference type="InterPro" id="IPR023018">
    <property type="entry name" value="Transpt_YidE_put"/>
</dbReference>
<dbReference type="InterPro" id="IPR006512">
    <property type="entry name" value="YidE_YbjL"/>
</dbReference>
<dbReference type="NCBIfam" id="NF003007">
    <property type="entry name" value="PRK03818.1"/>
    <property type="match status" value="1"/>
</dbReference>
<dbReference type="NCBIfam" id="TIGR01625">
    <property type="entry name" value="YidE_YbjL_dupl"/>
    <property type="match status" value="2"/>
</dbReference>
<dbReference type="PANTHER" id="PTHR30445">
    <property type="entry name" value="K(+)_H(+) ANTIPORTER SUBUNIT KHTT"/>
    <property type="match status" value="1"/>
</dbReference>
<dbReference type="PANTHER" id="PTHR30445:SF3">
    <property type="entry name" value="TRANSPORT PROTEIN YIDE-RELATED"/>
    <property type="match status" value="1"/>
</dbReference>
<dbReference type="Pfam" id="PF06826">
    <property type="entry name" value="Asp-Al_Ex"/>
    <property type="match status" value="2"/>
</dbReference>
<dbReference type="Pfam" id="PF02080">
    <property type="entry name" value="TrkA_C"/>
    <property type="match status" value="2"/>
</dbReference>
<dbReference type="SUPFAM" id="SSF116726">
    <property type="entry name" value="TrkA C-terminal domain-like"/>
    <property type="match status" value="2"/>
</dbReference>
<dbReference type="PROSITE" id="PS51202">
    <property type="entry name" value="RCK_C"/>
    <property type="match status" value="2"/>
</dbReference>
<accession>B4SY75</accession>
<organism>
    <name type="scientific">Salmonella newport (strain SL254)</name>
    <dbReference type="NCBI Taxonomy" id="423368"/>
    <lineage>
        <taxon>Bacteria</taxon>
        <taxon>Pseudomonadati</taxon>
        <taxon>Pseudomonadota</taxon>
        <taxon>Gammaproteobacteria</taxon>
        <taxon>Enterobacterales</taxon>
        <taxon>Enterobacteriaceae</taxon>
        <taxon>Salmonella</taxon>
    </lineage>
</organism>